<dbReference type="EC" id="1.1.-.-" evidence="6"/>
<dbReference type="EMBL" id="BC093357">
    <property type="protein sequence ID" value="AAH93357.1"/>
    <property type="molecule type" value="mRNA"/>
</dbReference>
<dbReference type="RefSeq" id="NP_001017758.1">
    <property type="nucleotide sequence ID" value="NM_001017758.1"/>
</dbReference>
<dbReference type="SMR" id="Q566S6"/>
<dbReference type="FunCoup" id="Q566S6">
    <property type="interactions" value="18"/>
</dbReference>
<dbReference type="STRING" id="7955.ENSDARP00000122514"/>
<dbReference type="PaxDb" id="7955-ENSDARP00000122514"/>
<dbReference type="PeptideAtlas" id="Q566S6"/>
<dbReference type="GeneID" id="550454"/>
<dbReference type="KEGG" id="dre:550454"/>
<dbReference type="AGR" id="ZFIN:ZDB-GENE-050417-277"/>
<dbReference type="CTD" id="25979"/>
<dbReference type="ZFIN" id="ZDB-GENE-050417-277">
    <property type="gene designation" value="dhrs7b"/>
</dbReference>
<dbReference type="eggNOG" id="KOG1205">
    <property type="taxonomic scope" value="Eukaryota"/>
</dbReference>
<dbReference type="InParanoid" id="Q566S6"/>
<dbReference type="OrthoDB" id="5307821at2759"/>
<dbReference type="PhylomeDB" id="Q566S6"/>
<dbReference type="Reactome" id="R-DRE-75896">
    <property type="pathway name" value="Plasmalogen biosynthesis"/>
</dbReference>
<dbReference type="PRO" id="PR:Q566S6"/>
<dbReference type="Proteomes" id="UP000000437">
    <property type="component" value="Chromosome 3"/>
</dbReference>
<dbReference type="GO" id="GO:0005789">
    <property type="term" value="C:endoplasmic reticulum membrane"/>
    <property type="evidence" value="ECO:0007669"/>
    <property type="project" value="UniProtKB-SubCell"/>
</dbReference>
<dbReference type="GO" id="GO:0016020">
    <property type="term" value="C:membrane"/>
    <property type="evidence" value="ECO:0000318"/>
    <property type="project" value="GO_Central"/>
</dbReference>
<dbReference type="GO" id="GO:0016491">
    <property type="term" value="F:oxidoreductase activity"/>
    <property type="evidence" value="ECO:0007669"/>
    <property type="project" value="UniProtKB-KW"/>
</dbReference>
<dbReference type="CDD" id="cd05332">
    <property type="entry name" value="11beta-HSD1_like_SDR_c"/>
    <property type="match status" value="1"/>
</dbReference>
<dbReference type="Gene3D" id="3.40.50.720">
    <property type="entry name" value="NAD(P)-binding Rossmann-like Domain"/>
    <property type="match status" value="1"/>
</dbReference>
<dbReference type="InterPro" id="IPR036291">
    <property type="entry name" value="NAD(P)-bd_dom_sf"/>
</dbReference>
<dbReference type="InterPro" id="IPR020904">
    <property type="entry name" value="Sc_DH/Rdtase_CS"/>
</dbReference>
<dbReference type="InterPro" id="IPR002347">
    <property type="entry name" value="SDR_fam"/>
</dbReference>
<dbReference type="PANTHER" id="PTHR44196">
    <property type="entry name" value="DEHYDROGENASE/REDUCTASE SDR FAMILY MEMBER 7B"/>
    <property type="match status" value="1"/>
</dbReference>
<dbReference type="PANTHER" id="PTHR44196:SF1">
    <property type="entry name" value="DEHYDROGENASE_REDUCTASE SDR FAMILY MEMBER 7B"/>
    <property type="match status" value="1"/>
</dbReference>
<dbReference type="Pfam" id="PF00106">
    <property type="entry name" value="adh_short"/>
    <property type="match status" value="1"/>
</dbReference>
<dbReference type="PIRSF" id="PIRSF000126">
    <property type="entry name" value="11-beta-HSD1"/>
    <property type="match status" value="1"/>
</dbReference>
<dbReference type="PRINTS" id="PR00081">
    <property type="entry name" value="GDHRDH"/>
</dbReference>
<dbReference type="PRINTS" id="PR00080">
    <property type="entry name" value="SDRFAMILY"/>
</dbReference>
<dbReference type="SMART" id="SM00822">
    <property type="entry name" value="PKS_KR"/>
    <property type="match status" value="1"/>
</dbReference>
<dbReference type="SUPFAM" id="SSF51735">
    <property type="entry name" value="NAD(P)-binding Rossmann-fold domains"/>
    <property type="match status" value="1"/>
</dbReference>
<dbReference type="PROSITE" id="PS00061">
    <property type="entry name" value="ADH_SHORT"/>
    <property type="match status" value="1"/>
</dbReference>
<reference key="1">
    <citation type="submission" date="2005-04" db="EMBL/GenBank/DDBJ databases">
        <authorList>
            <consortium name="NIH - Zebrafish Gene Collection (ZGC) project"/>
        </authorList>
    </citation>
    <scope>NUCLEOTIDE SEQUENCE [LARGE SCALE MRNA]</scope>
    <source>
        <tissue>Heart</tissue>
    </source>
</reference>
<gene>
    <name type="primary">dhrs7b</name>
    <name evidence="2" type="synonym">sdr32c1</name>
    <name type="ORF">zgc:112518</name>
</gene>
<organism>
    <name type="scientific">Danio rerio</name>
    <name type="common">Zebrafish</name>
    <name type="synonym">Brachydanio rerio</name>
    <dbReference type="NCBI Taxonomy" id="7955"/>
    <lineage>
        <taxon>Eukaryota</taxon>
        <taxon>Metazoa</taxon>
        <taxon>Chordata</taxon>
        <taxon>Craniata</taxon>
        <taxon>Vertebrata</taxon>
        <taxon>Euteleostomi</taxon>
        <taxon>Actinopterygii</taxon>
        <taxon>Neopterygii</taxon>
        <taxon>Teleostei</taxon>
        <taxon>Ostariophysi</taxon>
        <taxon>Cypriniformes</taxon>
        <taxon>Danionidae</taxon>
        <taxon>Danioninae</taxon>
        <taxon>Danio</taxon>
    </lineage>
</organism>
<evidence type="ECO:0000250" key="1">
    <source>
        <dbReference type="UniProtKB" id="Q5RJY4"/>
    </source>
</evidence>
<evidence type="ECO:0000250" key="2">
    <source>
        <dbReference type="UniProtKB" id="Q6IAN0"/>
    </source>
</evidence>
<evidence type="ECO:0000250" key="3">
    <source>
        <dbReference type="UniProtKB" id="Q99714"/>
    </source>
</evidence>
<evidence type="ECO:0000255" key="4"/>
<evidence type="ECO:0000255" key="5">
    <source>
        <dbReference type="PROSITE-ProRule" id="PRU10001"/>
    </source>
</evidence>
<evidence type="ECO:0000305" key="6"/>
<comment type="function">
    <text evidence="6">Putative oxidoreductase.</text>
</comment>
<comment type="subcellular location">
    <subcellularLocation>
        <location evidence="1">Endoplasmic reticulum membrane</location>
        <topology evidence="1">Single-pass type II membrane protein</topology>
    </subcellularLocation>
</comment>
<comment type="similarity">
    <text evidence="6">Belongs to the short-chain dehydrogenases/reductases (SDR) family.</text>
</comment>
<name>DRS7B_DANRE</name>
<feature type="chain" id="PRO_0000312109" description="Dehydrogenase/reductase SDR family member 7B">
    <location>
        <begin position="1"/>
        <end position="309"/>
    </location>
</feature>
<feature type="topological domain" description="Cytoplasmic" evidence="4">
    <location>
        <begin position="1"/>
        <end position="5"/>
    </location>
</feature>
<feature type="transmembrane region" description="Helical; Signal-anchor for type II membrane protein" evidence="4">
    <location>
        <begin position="6"/>
        <end position="26"/>
    </location>
</feature>
<feature type="topological domain" description="Lumenal" evidence="4">
    <location>
        <begin position="27"/>
        <end position="271"/>
    </location>
</feature>
<feature type="active site" description="Proton acceptor" evidence="5">
    <location>
        <position position="192"/>
    </location>
</feature>
<feature type="binding site" evidence="3">
    <location>
        <position position="47"/>
    </location>
    <ligand>
        <name>NAD(+)</name>
        <dbReference type="ChEBI" id="CHEBI:57540"/>
    </ligand>
</feature>
<feature type="binding site" evidence="3">
    <location>
        <position position="49"/>
    </location>
    <ligand>
        <name>NAD(+)</name>
        <dbReference type="ChEBI" id="CHEBI:57540"/>
    </ligand>
</feature>
<feature type="binding site" evidence="3">
    <location>
        <position position="179"/>
    </location>
    <ligand>
        <name>substrate</name>
    </ligand>
</feature>
<feature type="binding site" evidence="3">
    <location>
        <position position="192"/>
    </location>
    <ligand>
        <name>NAD(+)</name>
        <dbReference type="ChEBI" id="CHEBI:57540"/>
    </ligand>
</feature>
<feature type="binding site" evidence="3">
    <location>
        <position position="196"/>
    </location>
    <ligand>
        <name>NAD(+)</name>
        <dbReference type="ChEBI" id="CHEBI:57540"/>
    </ligand>
</feature>
<feature type="binding site" evidence="3">
    <location>
        <position position="227"/>
    </location>
    <ligand>
        <name>NAD(+)</name>
        <dbReference type="ChEBI" id="CHEBI:57540"/>
    </ligand>
</feature>
<proteinExistence type="evidence at transcript level"/>
<protein>
    <recommendedName>
        <fullName evidence="2">Dehydrogenase/reductase SDR family member 7B</fullName>
        <ecNumber evidence="6">1.1.-.-</ecNumber>
    </recommendedName>
    <alternativeName>
        <fullName evidence="2">Short-chain dehydrogenase/reductase family 32C member 1</fullName>
        <shortName>Protein SDR32C1</shortName>
    </alternativeName>
</protein>
<keyword id="KW-0256">Endoplasmic reticulum</keyword>
<keyword id="KW-0472">Membrane</keyword>
<keyword id="KW-0520">NAD</keyword>
<keyword id="KW-0521">NADP</keyword>
<keyword id="KW-0560">Oxidoreductase</keyword>
<keyword id="KW-1185">Reference proteome</keyword>
<keyword id="KW-0735">Signal-anchor</keyword>
<keyword id="KW-0812">Transmembrane</keyword>
<keyword id="KW-1133">Transmembrane helix</keyword>
<accession>Q566S6</accession>
<sequence>MERALGVGIGPLAAGTVGLLILLKVIQRLRRRPNIQDKVVVITGASSGLGKECARVFHAAGARLILCGRDQRRLQEVVEELGNKTYGKTKTYTPCTVTFDLSNTSVVCSAAAEILKRHGHVDVLINIAGVSYRGNILDTHVSVQREVMETNYFGPVALTQAILPSMVDRGSGHIVVISSVQGKISIPYRSAYAASKHAMQAYYDCLRAEVDSLGLHVSVLSPGYVRTNMSINAVTGDGSKYGVMDRTTATGADPVDVAKDILKAVCQKKKDVVMAGLGPTTAIYLRTLWPALYFRVMASRARKQTGKEE</sequence>